<dbReference type="EMBL" id="CP001614">
    <property type="protein sequence ID" value="ACR11570.1"/>
    <property type="molecule type" value="Genomic_DNA"/>
</dbReference>
<dbReference type="RefSeq" id="WP_015817682.1">
    <property type="nucleotide sequence ID" value="NC_012997.1"/>
</dbReference>
<dbReference type="SMR" id="C5BKL4"/>
<dbReference type="STRING" id="377629.TERTU_4735"/>
<dbReference type="KEGG" id="ttu:TERTU_4735"/>
<dbReference type="eggNOG" id="COG0445">
    <property type="taxonomic scope" value="Bacteria"/>
</dbReference>
<dbReference type="HOGENOM" id="CLU_007831_2_2_6"/>
<dbReference type="OrthoDB" id="9815560at2"/>
<dbReference type="Proteomes" id="UP000009080">
    <property type="component" value="Chromosome"/>
</dbReference>
<dbReference type="GO" id="GO:0005829">
    <property type="term" value="C:cytosol"/>
    <property type="evidence" value="ECO:0007669"/>
    <property type="project" value="TreeGrafter"/>
</dbReference>
<dbReference type="GO" id="GO:0050660">
    <property type="term" value="F:flavin adenine dinucleotide binding"/>
    <property type="evidence" value="ECO:0007669"/>
    <property type="project" value="UniProtKB-UniRule"/>
</dbReference>
<dbReference type="GO" id="GO:0030488">
    <property type="term" value="P:tRNA methylation"/>
    <property type="evidence" value="ECO:0007669"/>
    <property type="project" value="TreeGrafter"/>
</dbReference>
<dbReference type="GO" id="GO:0002098">
    <property type="term" value="P:tRNA wobble uridine modification"/>
    <property type="evidence" value="ECO:0007669"/>
    <property type="project" value="InterPro"/>
</dbReference>
<dbReference type="FunFam" id="1.10.10.1800:FF:000001">
    <property type="entry name" value="tRNA uridine 5-carboxymethylaminomethyl modification enzyme MnmG"/>
    <property type="match status" value="1"/>
</dbReference>
<dbReference type="FunFam" id="1.10.150.570:FF:000001">
    <property type="entry name" value="tRNA uridine 5-carboxymethylaminomethyl modification enzyme MnmG"/>
    <property type="match status" value="1"/>
</dbReference>
<dbReference type="FunFam" id="3.50.50.60:FF:000002">
    <property type="entry name" value="tRNA uridine 5-carboxymethylaminomethyl modification enzyme MnmG"/>
    <property type="match status" value="1"/>
</dbReference>
<dbReference type="FunFam" id="3.50.50.60:FF:000010">
    <property type="entry name" value="tRNA uridine 5-carboxymethylaminomethyl modification enzyme MnmG"/>
    <property type="match status" value="1"/>
</dbReference>
<dbReference type="Gene3D" id="3.50.50.60">
    <property type="entry name" value="FAD/NAD(P)-binding domain"/>
    <property type="match status" value="2"/>
</dbReference>
<dbReference type="Gene3D" id="1.10.150.570">
    <property type="entry name" value="GidA associated domain, C-terminal subdomain"/>
    <property type="match status" value="1"/>
</dbReference>
<dbReference type="Gene3D" id="1.10.10.1800">
    <property type="entry name" value="tRNA uridine 5-carboxymethylaminomethyl modification enzyme MnmG/GidA"/>
    <property type="match status" value="1"/>
</dbReference>
<dbReference type="HAMAP" id="MF_00129">
    <property type="entry name" value="MnmG_GidA"/>
    <property type="match status" value="1"/>
</dbReference>
<dbReference type="InterPro" id="IPR036188">
    <property type="entry name" value="FAD/NAD-bd_sf"/>
</dbReference>
<dbReference type="InterPro" id="IPR049312">
    <property type="entry name" value="GIDA_C_N"/>
</dbReference>
<dbReference type="InterPro" id="IPR004416">
    <property type="entry name" value="MnmG"/>
</dbReference>
<dbReference type="InterPro" id="IPR002218">
    <property type="entry name" value="MnmG-rel"/>
</dbReference>
<dbReference type="InterPro" id="IPR020595">
    <property type="entry name" value="MnmG-rel_CS"/>
</dbReference>
<dbReference type="InterPro" id="IPR026904">
    <property type="entry name" value="MnmG_C"/>
</dbReference>
<dbReference type="InterPro" id="IPR047001">
    <property type="entry name" value="MnmG_C_subdom"/>
</dbReference>
<dbReference type="InterPro" id="IPR044920">
    <property type="entry name" value="MnmG_C_subdom_sf"/>
</dbReference>
<dbReference type="InterPro" id="IPR040131">
    <property type="entry name" value="MnmG_N"/>
</dbReference>
<dbReference type="NCBIfam" id="TIGR00136">
    <property type="entry name" value="mnmG_gidA"/>
    <property type="match status" value="1"/>
</dbReference>
<dbReference type="PANTHER" id="PTHR11806">
    <property type="entry name" value="GLUCOSE INHIBITED DIVISION PROTEIN A"/>
    <property type="match status" value="1"/>
</dbReference>
<dbReference type="PANTHER" id="PTHR11806:SF0">
    <property type="entry name" value="PROTEIN MTO1 HOMOLOG, MITOCHONDRIAL"/>
    <property type="match status" value="1"/>
</dbReference>
<dbReference type="Pfam" id="PF01134">
    <property type="entry name" value="GIDA"/>
    <property type="match status" value="1"/>
</dbReference>
<dbReference type="Pfam" id="PF21680">
    <property type="entry name" value="GIDA_C_1st"/>
    <property type="match status" value="1"/>
</dbReference>
<dbReference type="Pfam" id="PF13932">
    <property type="entry name" value="SAM_GIDA_C"/>
    <property type="match status" value="1"/>
</dbReference>
<dbReference type="SMART" id="SM01228">
    <property type="entry name" value="GIDA_assoc_3"/>
    <property type="match status" value="1"/>
</dbReference>
<dbReference type="SUPFAM" id="SSF51905">
    <property type="entry name" value="FAD/NAD(P)-binding domain"/>
    <property type="match status" value="1"/>
</dbReference>
<dbReference type="PROSITE" id="PS01280">
    <property type="entry name" value="GIDA_1"/>
    <property type="match status" value="1"/>
</dbReference>
<dbReference type="PROSITE" id="PS01281">
    <property type="entry name" value="GIDA_2"/>
    <property type="match status" value="1"/>
</dbReference>
<keyword id="KW-0963">Cytoplasm</keyword>
<keyword id="KW-0274">FAD</keyword>
<keyword id="KW-0285">Flavoprotein</keyword>
<keyword id="KW-0520">NAD</keyword>
<keyword id="KW-1185">Reference proteome</keyword>
<keyword id="KW-0819">tRNA processing</keyword>
<evidence type="ECO:0000255" key="1">
    <source>
        <dbReference type="HAMAP-Rule" id="MF_00129"/>
    </source>
</evidence>
<feature type="chain" id="PRO_1000203169" description="tRNA uridine 5-carboxymethylaminomethyl modification enzyme MnmG">
    <location>
        <begin position="1"/>
        <end position="630"/>
    </location>
</feature>
<feature type="binding site" evidence="1">
    <location>
        <begin position="13"/>
        <end position="18"/>
    </location>
    <ligand>
        <name>FAD</name>
        <dbReference type="ChEBI" id="CHEBI:57692"/>
    </ligand>
</feature>
<feature type="binding site" evidence="1">
    <location>
        <begin position="273"/>
        <end position="287"/>
    </location>
    <ligand>
        <name>NAD(+)</name>
        <dbReference type="ChEBI" id="CHEBI:57540"/>
    </ligand>
</feature>
<name>MNMG_TERTT</name>
<comment type="function">
    <text evidence="1">NAD-binding protein involved in the addition of a carboxymethylaminomethyl (cmnm) group at the wobble position (U34) of certain tRNAs, forming tRNA-cmnm(5)s(2)U34.</text>
</comment>
<comment type="cofactor">
    <cofactor evidence="1">
        <name>FAD</name>
        <dbReference type="ChEBI" id="CHEBI:57692"/>
    </cofactor>
</comment>
<comment type="subunit">
    <text evidence="1">Homodimer. Heterotetramer of two MnmE and two MnmG subunits.</text>
</comment>
<comment type="subcellular location">
    <subcellularLocation>
        <location evidence="1">Cytoplasm</location>
    </subcellularLocation>
</comment>
<comment type="similarity">
    <text evidence="1">Belongs to the MnmG family.</text>
</comment>
<sequence length="630" mass="69504">MIFPDKFDVIVIGGGHAGTEACLAAARMGCKTLLLSHNIETLGQMSCNPAIGGIGKSHLVKEIDALGGAMAKATDKGGIQFRVLNNRKGPAVRATRAQADRVLYKAAVREILENQPNLTIFQQAADDLVVEGETVRGVVTQMGVTFLAPTVVLTAGTFLGGRIHIGLENHSGGRAGDPPSIALADRLRELPLRVDRLKTGTPPRIDARSVNFDGLDEQWGDKPTPVMSFLGSQDDHPRQTCCWVTHTNERTHDIIRSGFDRSPMFTGVIEGVGPRYCPSIEDKVNRFADKNSHQIFIEPEGLTTHELYPNGISTSLPFDIQLALVRSIKGFENAHIVRPGYAIEYDFFNPQDLQYSLETKVISGLFFAGQINGTTGYEEAGAQGLLAGANAALKAQGKEPWCPERDQAYMGVLVDDLITMGTREPYRMFTSRAEYRLLLREDNADLRLTEKGRELGLVDDIRWAAFCEKREQIEQETQRMRSTWVQANSAEALQLADKLTAPLNREYSLLDLLKRPELTYADLGHLKGEAVANVQVAEQVEITAKYAGYIDRQQDEIARLRQHENTPIPASFDYDSVEGLSNELKQKLNEARPDNIARASRIPGITPAAISLLVIYLKKRGMLRKVAAES</sequence>
<protein>
    <recommendedName>
        <fullName evidence="1">tRNA uridine 5-carboxymethylaminomethyl modification enzyme MnmG</fullName>
    </recommendedName>
    <alternativeName>
        <fullName evidence="1">Glucose-inhibited division protein A</fullName>
    </alternativeName>
</protein>
<gene>
    <name evidence="1" type="primary">mnmG</name>
    <name evidence="1" type="synonym">gidA</name>
    <name type="ordered locus">TERTU_4735</name>
</gene>
<proteinExistence type="inferred from homology"/>
<reference key="1">
    <citation type="journal article" date="2009" name="PLoS ONE">
        <title>The complete genome of Teredinibacter turnerae T7901: an intracellular endosymbiont of marine wood-boring bivalves (shipworms).</title>
        <authorList>
            <person name="Yang J.C."/>
            <person name="Madupu R."/>
            <person name="Durkin A.S."/>
            <person name="Ekborg N.A."/>
            <person name="Pedamallu C.S."/>
            <person name="Hostetler J.B."/>
            <person name="Radune D."/>
            <person name="Toms B.S."/>
            <person name="Henrissat B."/>
            <person name="Coutinho P.M."/>
            <person name="Schwarz S."/>
            <person name="Field L."/>
            <person name="Trindade-Silva A.E."/>
            <person name="Soares C.A.G."/>
            <person name="Elshahawi S."/>
            <person name="Hanora A."/>
            <person name="Schmidt E.W."/>
            <person name="Haygood M.G."/>
            <person name="Posfai J."/>
            <person name="Benner J."/>
            <person name="Madinger C."/>
            <person name="Nove J."/>
            <person name="Anton B."/>
            <person name="Chaudhary K."/>
            <person name="Foster J."/>
            <person name="Holman A."/>
            <person name="Kumar S."/>
            <person name="Lessard P.A."/>
            <person name="Luyten Y.A."/>
            <person name="Slatko B."/>
            <person name="Wood N."/>
            <person name="Wu B."/>
            <person name="Teplitski M."/>
            <person name="Mougous J.D."/>
            <person name="Ward N."/>
            <person name="Eisen J.A."/>
            <person name="Badger J.H."/>
            <person name="Distel D.L."/>
        </authorList>
    </citation>
    <scope>NUCLEOTIDE SEQUENCE [LARGE SCALE GENOMIC DNA]</scope>
    <source>
        <strain>ATCC 39867 / T7901</strain>
    </source>
</reference>
<organism>
    <name type="scientific">Teredinibacter turnerae (strain ATCC 39867 / T7901)</name>
    <dbReference type="NCBI Taxonomy" id="377629"/>
    <lineage>
        <taxon>Bacteria</taxon>
        <taxon>Pseudomonadati</taxon>
        <taxon>Pseudomonadota</taxon>
        <taxon>Gammaproteobacteria</taxon>
        <taxon>Cellvibrionales</taxon>
        <taxon>Cellvibrionaceae</taxon>
        <taxon>Teredinibacter</taxon>
    </lineage>
</organism>
<accession>C5BKL4</accession>